<gene>
    <name evidence="1" type="primary">queA</name>
    <name type="ordered locus">MGAS10270_Spy1210</name>
</gene>
<organism>
    <name type="scientific">Streptococcus pyogenes serotype M2 (strain MGAS10270)</name>
    <dbReference type="NCBI Taxonomy" id="370552"/>
    <lineage>
        <taxon>Bacteria</taxon>
        <taxon>Bacillati</taxon>
        <taxon>Bacillota</taxon>
        <taxon>Bacilli</taxon>
        <taxon>Lactobacillales</taxon>
        <taxon>Streptococcaceae</taxon>
        <taxon>Streptococcus</taxon>
    </lineage>
</organism>
<sequence length="342" mass="38362">MNTNDFDFELPEELIAQTPLEKRDSSKLLIIDHRQKTMVDSHFDHIIDQLNPGDALVMNNTRVLPARLYGEKPDTHGHVELLLLKNTQGDQWEVLAKPAKRLKVGSQVNFGNGHLKATIIDELEHGGRIVEFSYDGIFLEVLESLGEMPLPPYIHEKLEDAERYQTVYAKENGSAAAPTAGLHFTTDLLKKIEAKGVHLVYLTLHVGLGTFRPVSVDNLDEHDMHSEFYSLSEEAAQTLRDVKQAGGRVVAVGTTSIRTLETIGSKFQGDIQADSGWTNIFIKPGYQFKVVDAFSTNFHLPKSTLVMLVSAFAGRDFVLEAYRHAVDEKYRFFSFGDAMFVN</sequence>
<protein>
    <recommendedName>
        <fullName evidence="1">S-adenosylmethionine:tRNA ribosyltransferase-isomerase</fullName>
        <ecNumber evidence="1">2.4.99.17</ecNumber>
    </recommendedName>
    <alternativeName>
        <fullName evidence="1">Queuosine biosynthesis protein QueA</fullName>
    </alternativeName>
</protein>
<dbReference type="EC" id="2.4.99.17" evidence="1"/>
<dbReference type="EMBL" id="CP000260">
    <property type="protein sequence ID" value="ABF34275.1"/>
    <property type="molecule type" value="Genomic_DNA"/>
</dbReference>
<dbReference type="SMR" id="Q1JG69"/>
<dbReference type="KEGG" id="sph:MGAS10270_Spy1210"/>
<dbReference type="HOGENOM" id="CLU_039110_1_0_9"/>
<dbReference type="UniPathway" id="UPA00392"/>
<dbReference type="Proteomes" id="UP000002436">
    <property type="component" value="Chromosome"/>
</dbReference>
<dbReference type="GO" id="GO:0005737">
    <property type="term" value="C:cytoplasm"/>
    <property type="evidence" value="ECO:0007669"/>
    <property type="project" value="UniProtKB-SubCell"/>
</dbReference>
<dbReference type="GO" id="GO:0051075">
    <property type="term" value="F:S-adenosylmethionine:tRNA ribosyltransferase-isomerase activity"/>
    <property type="evidence" value="ECO:0007669"/>
    <property type="project" value="UniProtKB-EC"/>
</dbReference>
<dbReference type="GO" id="GO:0008616">
    <property type="term" value="P:queuosine biosynthetic process"/>
    <property type="evidence" value="ECO:0007669"/>
    <property type="project" value="UniProtKB-UniRule"/>
</dbReference>
<dbReference type="GO" id="GO:0002099">
    <property type="term" value="P:tRNA wobble guanine modification"/>
    <property type="evidence" value="ECO:0007669"/>
    <property type="project" value="TreeGrafter"/>
</dbReference>
<dbReference type="FunFam" id="2.40.10.240:FF:000002">
    <property type="entry name" value="S-adenosylmethionine:tRNA ribosyltransferase-isomerase"/>
    <property type="match status" value="1"/>
</dbReference>
<dbReference type="FunFam" id="3.40.1780.10:FF:000001">
    <property type="entry name" value="S-adenosylmethionine:tRNA ribosyltransferase-isomerase"/>
    <property type="match status" value="1"/>
</dbReference>
<dbReference type="Gene3D" id="2.40.10.240">
    <property type="entry name" value="QueA-like"/>
    <property type="match status" value="1"/>
</dbReference>
<dbReference type="Gene3D" id="3.40.1780.10">
    <property type="entry name" value="QueA-like"/>
    <property type="match status" value="1"/>
</dbReference>
<dbReference type="HAMAP" id="MF_00113">
    <property type="entry name" value="QueA"/>
    <property type="match status" value="1"/>
</dbReference>
<dbReference type="InterPro" id="IPR003699">
    <property type="entry name" value="QueA"/>
</dbReference>
<dbReference type="InterPro" id="IPR042118">
    <property type="entry name" value="QueA_dom1"/>
</dbReference>
<dbReference type="InterPro" id="IPR042119">
    <property type="entry name" value="QueA_dom2"/>
</dbReference>
<dbReference type="InterPro" id="IPR036100">
    <property type="entry name" value="QueA_sf"/>
</dbReference>
<dbReference type="NCBIfam" id="NF001140">
    <property type="entry name" value="PRK00147.1"/>
    <property type="match status" value="1"/>
</dbReference>
<dbReference type="NCBIfam" id="TIGR00113">
    <property type="entry name" value="queA"/>
    <property type="match status" value="1"/>
</dbReference>
<dbReference type="PANTHER" id="PTHR30307">
    <property type="entry name" value="S-ADENOSYLMETHIONINE:TRNA RIBOSYLTRANSFERASE-ISOMERASE"/>
    <property type="match status" value="1"/>
</dbReference>
<dbReference type="PANTHER" id="PTHR30307:SF0">
    <property type="entry name" value="S-ADENOSYLMETHIONINE:TRNA RIBOSYLTRANSFERASE-ISOMERASE"/>
    <property type="match status" value="1"/>
</dbReference>
<dbReference type="Pfam" id="PF02547">
    <property type="entry name" value="Queuosine_synth"/>
    <property type="match status" value="1"/>
</dbReference>
<dbReference type="SUPFAM" id="SSF111337">
    <property type="entry name" value="QueA-like"/>
    <property type="match status" value="1"/>
</dbReference>
<proteinExistence type="inferred from homology"/>
<name>QUEA_STRPD</name>
<accession>Q1JG69</accession>
<reference key="1">
    <citation type="journal article" date="2006" name="Proc. Natl. Acad. Sci. U.S.A.">
        <title>Molecular genetic anatomy of inter- and intraserotype variation in the human bacterial pathogen group A Streptococcus.</title>
        <authorList>
            <person name="Beres S.B."/>
            <person name="Richter E.W."/>
            <person name="Nagiec M.J."/>
            <person name="Sumby P."/>
            <person name="Porcella S.F."/>
            <person name="DeLeo F.R."/>
            <person name="Musser J.M."/>
        </authorList>
    </citation>
    <scope>NUCLEOTIDE SEQUENCE [LARGE SCALE GENOMIC DNA]</scope>
    <source>
        <strain>MGAS10270</strain>
    </source>
</reference>
<feature type="chain" id="PRO_1000015291" description="S-adenosylmethionine:tRNA ribosyltransferase-isomerase">
    <location>
        <begin position="1"/>
        <end position="342"/>
    </location>
</feature>
<evidence type="ECO:0000255" key="1">
    <source>
        <dbReference type="HAMAP-Rule" id="MF_00113"/>
    </source>
</evidence>
<keyword id="KW-0963">Cytoplasm</keyword>
<keyword id="KW-0671">Queuosine biosynthesis</keyword>
<keyword id="KW-0949">S-adenosyl-L-methionine</keyword>
<keyword id="KW-0808">Transferase</keyword>
<comment type="function">
    <text evidence="1">Transfers and isomerizes the ribose moiety from AdoMet to the 7-aminomethyl group of 7-deazaguanine (preQ1-tRNA) to give epoxyqueuosine (oQ-tRNA).</text>
</comment>
<comment type="catalytic activity">
    <reaction evidence="1">
        <text>7-aminomethyl-7-carbaguanosine(34) in tRNA + S-adenosyl-L-methionine = epoxyqueuosine(34) in tRNA + adenine + L-methionine + 2 H(+)</text>
        <dbReference type="Rhea" id="RHEA:32155"/>
        <dbReference type="Rhea" id="RHEA-COMP:10342"/>
        <dbReference type="Rhea" id="RHEA-COMP:18582"/>
        <dbReference type="ChEBI" id="CHEBI:15378"/>
        <dbReference type="ChEBI" id="CHEBI:16708"/>
        <dbReference type="ChEBI" id="CHEBI:57844"/>
        <dbReference type="ChEBI" id="CHEBI:59789"/>
        <dbReference type="ChEBI" id="CHEBI:82833"/>
        <dbReference type="ChEBI" id="CHEBI:194443"/>
        <dbReference type="EC" id="2.4.99.17"/>
    </reaction>
</comment>
<comment type="pathway">
    <text evidence="1">tRNA modification; tRNA-queuosine biosynthesis.</text>
</comment>
<comment type="subunit">
    <text evidence="1">Monomer.</text>
</comment>
<comment type="subcellular location">
    <subcellularLocation>
        <location evidence="1">Cytoplasm</location>
    </subcellularLocation>
</comment>
<comment type="similarity">
    <text evidence="1">Belongs to the QueA family.</text>
</comment>